<dbReference type="EC" id="2.7.7.49"/>
<dbReference type="EMBL" id="M11301">
    <property type="protein sequence ID" value="AAA37560.1"/>
    <property type="molecule type" value="mRNA"/>
</dbReference>
<dbReference type="PIR" id="A29350">
    <property type="entry name" value="A29350"/>
</dbReference>
<dbReference type="SMR" id="P10400"/>
<dbReference type="PeptideAtlas" id="P10400"/>
<dbReference type="ProteomicsDB" id="289779"/>
<dbReference type="InParanoid" id="P10400"/>
<dbReference type="Proteomes" id="UP000000589">
    <property type="component" value="Unplaced"/>
</dbReference>
<dbReference type="RNAct" id="P10400">
    <property type="molecule type" value="protein"/>
</dbReference>
<dbReference type="GO" id="GO:0004519">
    <property type="term" value="F:endonuclease activity"/>
    <property type="evidence" value="ECO:0007669"/>
    <property type="project" value="UniProtKB-KW"/>
</dbReference>
<dbReference type="GO" id="GO:0003964">
    <property type="term" value="F:RNA-directed DNA polymerase activity"/>
    <property type="evidence" value="ECO:0007669"/>
    <property type="project" value="UniProtKB-KW"/>
</dbReference>
<dbReference type="FunFam" id="2.30.30.850:FF:000001">
    <property type="entry name" value="Gag-Pol polyprotein"/>
    <property type="match status" value="1"/>
</dbReference>
<dbReference type="Gene3D" id="2.30.30.850">
    <property type="match status" value="1"/>
</dbReference>
<dbReference type="InterPro" id="IPR040643">
    <property type="entry name" value="MLVIN_C"/>
</dbReference>
<dbReference type="Pfam" id="PF18697">
    <property type="entry name" value="MLVIN_C"/>
    <property type="match status" value="1"/>
</dbReference>
<name>POL1_MOUSE</name>
<feature type="chain" id="PRO_0000058508" description="Retrovirus-related Pol polyprotein">
    <location>
        <begin position="1" status="less than"/>
        <end position="120"/>
    </location>
</feature>
<feature type="region of interest" description="Disordered" evidence="1">
    <location>
        <begin position="90"/>
        <end position="109"/>
    </location>
</feature>
<feature type="compositionally biased region" description="Low complexity" evidence="1">
    <location>
        <begin position="90"/>
        <end position="101"/>
    </location>
</feature>
<feature type="non-terminal residue">
    <location>
        <position position="1"/>
    </location>
</feature>
<sequence>PSLQAHLQALQAVQREVWKPLAAAYQDQQDQPVIPHPFRVGDTVWVRRHQTKNLEPRWKGPYTVLLTTPTALKVDGIAAWIHAAHVKAATTPPAGTASGPTWKVQRSQNPLKIRLTRGAP</sequence>
<reference key="1">
    <citation type="journal article" date="1985" name="J. Virol.">
        <title>Normal expression of polymorphic endogenous retroviral RNA containing segments identical to mink cell focus-forming virus.</title>
        <authorList>
            <person name="Levy D.E."/>
            <person name="Lerner R.A."/>
            <person name="Wilson M.C."/>
        </authorList>
    </citation>
    <scope>NUCLEOTIDE SEQUENCE [MRNA] (CLONE E1)</scope>
</reference>
<proteinExistence type="evidence at transcript level"/>
<evidence type="ECO:0000256" key="1">
    <source>
        <dbReference type="SAM" id="MobiDB-lite"/>
    </source>
</evidence>
<protein>
    <recommendedName>
        <fullName>Retrovirus-related Pol polyprotein</fullName>
    </recommendedName>
    <domain>
        <recommendedName>
            <fullName>Reverse transcriptase</fullName>
            <ecNumber>2.7.7.49</ecNumber>
        </recommendedName>
    </domain>
    <domain>
        <recommendedName>
            <fullName>Endonuclease</fullName>
        </recommendedName>
    </domain>
</protein>
<gene>
    <name type="primary">Pol</name>
</gene>
<keyword id="KW-0255">Endonuclease</keyword>
<keyword id="KW-0378">Hydrolase</keyword>
<keyword id="KW-0540">Nuclease</keyword>
<keyword id="KW-0548">Nucleotidyltransferase</keyword>
<keyword id="KW-1185">Reference proteome</keyword>
<keyword id="KW-0695">RNA-directed DNA polymerase</keyword>
<keyword id="KW-0808">Transferase</keyword>
<comment type="catalytic activity">
    <reaction>
        <text>DNA(n) + a 2'-deoxyribonucleoside 5'-triphosphate = DNA(n+1) + diphosphate</text>
        <dbReference type="Rhea" id="RHEA:22508"/>
        <dbReference type="Rhea" id="RHEA-COMP:17339"/>
        <dbReference type="Rhea" id="RHEA-COMP:17340"/>
        <dbReference type="ChEBI" id="CHEBI:33019"/>
        <dbReference type="ChEBI" id="CHEBI:61560"/>
        <dbReference type="ChEBI" id="CHEBI:173112"/>
        <dbReference type="EC" id="2.7.7.49"/>
    </reaction>
</comment>
<accession>P10400</accession>
<organism>
    <name type="scientific">Mus musculus</name>
    <name type="common">Mouse</name>
    <dbReference type="NCBI Taxonomy" id="10090"/>
    <lineage>
        <taxon>Eukaryota</taxon>
        <taxon>Metazoa</taxon>
        <taxon>Chordata</taxon>
        <taxon>Craniata</taxon>
        <taxon>Vertebrata</taxon>
        <taxon>Euteleostomi</taxon>
        <taxon>Mammalia</taxon>
        <taxon>Eutheria</taxon>
        <taxon>Euarchontoglires</taxon>
        <taxon>Glires</taxon>
        <taxon>Rodentia</taxon>
        <taxon>Myomorpha</taxon>
        <taxon>Muroidea</taxon>
        <taxon>Muridae</taxon>
        <taxon>Murinae</taxon>
        <taxon>Mus</taxon>
        <taxon>Mus</taxon>
    </lineage>
</organism>